<accession>O77746</accession>
<accession>O77747</accession>
<name>PDE5A_CANLF</name>
<comment type="function">
    <text evidence="2">Plays a role in signal transduction by regulating the intracellular concentration of cyclic nucleotides. This phosphodiesterase catalyzes the specific hydrolysis of cGMP to 5'-GMP. Specifically regulates nitric-oxide-generated cGMP.</text>
</comment>
<comment type="catalytic activity">
    <reaction evidence="2">
        <text>3',5'-cyclic GMP + H2O = GMP + H(+)</text>
        <dbReference type="Rhea" id="RHEA:16957"/>
        <dbReference type="ChEBI" id="CHEBI:15377"/>
        <dbReference type="ChEBI" id="CHEBI:15378"/>
        <dbReference type="ChEBI" id="CHEBI:57746"/>
        <dbReference type="ChEBI" id="CHEBI:58115"/>
        <dbReference type="EC" id="3.1.4.35"/>
    </reaction>
    <physiologicalReaction direction="left-to-right" evidence="2">
        <dbReference type="Rhea" id="RHEA:16958"/>
    </physiologicalReaction>
</comment>
<comment type="cofactor">
    <cofactor evidence="2">
        <name>Zn(2+)</name>
        <dbReference type="ChEBI" id="CHEBI:29105"/>
    </cofactor>
    <text evidence="2">Binds 1 Zn(2+) ion per subunit. Binds 2 divalent metal cations per subunit: site 1 preferentially binds zinc, while site 2 has a preference for magnesium. Tightly binds zinc.</text>
</comment>
<comment type="cofactor">
    <cofactor evidence="2">
        <name>Mg(2+)</name>
        <dbReference type="ChEBI" id="CHEBI:18420"/>
    </cofactor>
    <text evidence="2">Binds 1 Mg(2+) ions per subunit. Binds 2 divalent metal cations per subunit: site 1 preferentially binds zinc, while site 2 has a preference for magnesium. Binds magnesium less tightly than zinc.</text>
</comment>
<comment type="activity regulation">
    <text>Inhibited by zaprinast.</text>
</comment>
<comment type="pathway">
    <text>Purine metabolism; 3',5'-cyclic GMP degradation; GMP from 3',5'-cyclic GMP: step 1/1.</text>
</comment>
<comment type="subcellular location">
    <subcellularLocation>
        <location>Cytoplasm</location>
    </subcellularLocation>
    <subcellularLocation>
        <location>Cytoplasm</location>
        <location>Cytosol</location>
    </subcellularLocation>
    <text>PDE5A1 and PDE5A2 are located mostly to soluble cellular fractions and some to particulate cellular fractions.</text>
</comment>
<comment type="alternative products">
    <event type="alternative splicing"/>
    <isoform>
        <id>O77746-1</id>
        <name>PDE5A1</name>
        <sequence type="displayed"/>
    </isoform>
    <isoform>
        <id>O77746-2</id>
        <name>PDE5A2</name>
        <sequence type="described" ref="VSP_004590"/>
    </isoform>
</comment>
<comment type="tissue specificity">
    <text>Isoform PDE5A1 and isoform PDE5A2 are highly expressed in the cerebellum, hippocampus, retina, lung, heart, spleen, and thoracic artery. Isoform PDE5A1, but not isoform PDE5A2, is also abundantly expressed in the pylorus.</text>
</comment>
<comment type="domain">
    <text>Composed of a C-terminal catalytic domain containing two putative divalent metal sites and an N-terminal regulatory domain which contains two homologous allosteric cGMP-binding regions, A and B.</text>
</comment>
<comment type="PTM">
    <text evidence="1">Phosphorylation is regulated by binding of cGMP to the two allosteric sites. Phosphorylation by PRKG1 leads to its activation.</text>
</comment>
<comment type="miscellaneous">
    <text>cGMP-binding to the allosteric sites is stimulated by 3-isobutyl-1-methylxanthine (IBMX).</text>
</comment>
<comment type="similarity">
    <text evidence="8">Belongs to the cyclic nucleotide phosphodiesterase family.</text>
</comment>
<evidence type="ECO:0000250" key="1"/>
<evidence type="ECO:0000250" key="2">
    <source>
        <dbReference type="UniProtKB" id="O76074"/>
    </source>
</evidence>
<evidence type="ECO:0000250" key="3">
    <source>
        <dbReference type="UniProtKB" id="O76083"/>
    </source>
</evidence>
<evidence type="ECO:0000255" key="4"/>
<evidence type="ECO:0000255" key="5">
    <source>
        <dbReference type="PROSITE-ProRule" id="PRU01192"/>
    </source>
</evidence>
<evidence type="ECO:0000256" key="6">
    <source>
        <dbReference type="SAM" id="MobiDB-lite"/>
    </source>
</evidence>
<evidence type="ECO:0000303" key="7">
    <source>
    </source>
</evidence>
<evidence type="ECO:0000305" key="8"/>
<organism>
    <name type="scientific">Canis lupus familiaris</name>
    <name type="common">Dog</name>
    <name type="synonym">Canis familiaris</name>
    <dbReference type="NCBI Taxonomy" id="9615"/>
    <lineage>
        <taxon>Eukaryota</taxon>
        <taxon>Metazoa</taxon>
        <taxon>Chordata</taxon>
        <taxon>Craniata</taxon>
        <taxon>Vertebrata</taxon>
        <taxon>Euteleostomi</taxon>
        <taxon>Mammalia</taxon>
        <taxon>Eutheria</taxon>
        <taxon>Laurasiatheria</taxon>
        <taxon>Carnivora</taxon>
        <taxon>Caniformia</taxon>
        <taxon>Canidae</taxon>
        <taxon>Canis</taxon>
    </lineage>
</organism>
<keyword id="KW-0021">Allosteric enzyme</keyword>
<keyword id="KW-0025">Alternative splicing</keyword>
<keyword id="KW-0140">cGMP</keyword>
<keyword id="KW-0142">cGMP-binding</keyword>
<keyword id="KW-0963">Cytoplasm</keyword>
<keyword id="KW-0378">Hydrolase</keyword>
<keyword id="KW-0460">Magnesium</keyword>
<keyword id="KW-0479">Metal-binding</keyword>
<keyword id="KW-0547">Nucleotide-binding</keyword>
<keyword id="KW-0597">Phosphoprotein</keyword>
<keyword id="KW-1185">Reference proteome</keyword>
<keyword id="KW-0677">Repeat</keyword>
<keyword id="KW-0862">Zinc</keyword>
<gene>
    <name type="primary">PDE5A</name>
    <name type="synonym">PDE5</name>
</gene>
<reference key="1">
    <citation type="journal article" date="1998" name="J. Biol. Chem.">
        <title>Novel alternative splice variants of cGMP-binding cGMP-specific phosphodiesterase.</title>
        <authorList>
            <person name="Kotera J."/>
            <person name="Fujishige K."/>
            <person name="Akatsuka H."/>
            <person name="Imai Y."/>
            <person name="Yanaka N."/>
            <person name="Omori K."/>
        </authorList>
    </citation>
    <scope>NUCLEOTIDE SEQUENCE [MRNA] (ISOFORMS PDE5A1 AND PDE5A2)</scope>
    <source>
        <tissue>Lung</tissue>
    </source>
</reference>
<dbReference type="EC" id="3.1.4.35" evidence="2"/>
<dbReference type="EMBL" id="AB008467">
    <property type="protein sequence ID" value="BAA33503.1"/>
    <property type="molecule type" value="mRNA"/>
</dbReference>
<dbReference type="EMBL" id="AB008468">
    <property type="protein sequence ID" value="BAA33504.1"/>
    <property type="molecule type" value="mRNA"/>
</dbReference>
<dbReference type="RefSeq" id="NP_001003188.1">
    <molecule id="O77746-2"/>
    <property type="nucleotide sequence ID" value="NM_001003188.1"/>
</dbReference>
<dbReference type="RefSeq" id="XP_005639100.1">
    <property type="nucleotide sequence ID" value="XM_005639043.2"/>
</dbReference>
<dbReference type="SMR" id="O77746"/>
<dbReference type="FunCoup" id="O77746">
    <property type="interactions" value="961"/>
</dbReference>
<dbReference type="STRING" id="9615.ENSCAFP00000064389"/>
<dbReference type="BindingDB" id="O77746"/>
<dbReference type="ChEMBL" id="CHEMBL2304402"/>
<dbReference type="DrugCentral" id="O77746"/>
<dbReference type="PaxDb" id="9612-ENSCAFP00000034752"/>
<dbReference type="Ensembl" id="ENSCAFT00000019808.4">
    <molecule id="O77746-2"/>
    <property type="protein sequence ID" value="ENSCAFP00000018375.3"/>
    <property type="gene ID" value="ENSCAFG00000012472.6"/>
</dbReference>
<dbReference type="Ensembl" id="ENSCAFT00000085268.2">
    <molecule id="O77746-1"/>
    <property type="protein sequence ID" value="ENSCAFP00000062262.2"/>
    <property type="gene ID" value="ENSCAFG00000012472.6"/>
</dbReference>
<dbReference type="Ensembl" id="ENSCAFT00040036119.1">
    <molecule id="O77746-2"/>
    <property type="protein sequence ID" value="ENSCAFP00040031453.1"/>
    <property type="gene ID" value="ENSCAFG00040019329.1"/>
</dbReference>
<dbReference type="GeneID" id="403825"/>
<dbReference type="KEGG" id="cfa:403825"/>
<dbReference type="CTD" id="8654"/>
<dbReference type="eggNOG" id="KOG3689">
    <property type="taxonomic scope" value="Eukaryota"/>
</dbReference>
<dbReference type="HOGENOM" id="CLU_006980_0_2_1"/>
<dbReference type="InParanoid" id="O77746"/>
<dbReference type="OMA" id="PIWLPLA"/>
<dbReference type="OrthoDB" id="74705at2759"/>
<dbReference type="TreeFam" id="TF316499"/>
<dbReference type="Reactome" id="R-CFA-418457">
    <property type="pathway name" value="cGMP effects"/>
</dbReference>
<dbReference type="Reactome" id="R-CFA-445355">
    <property type="pathway name" value="Smooth Muscle Contraction"/>
</dbReference>
<dbReference type="Reactome" id="R-CFA-9013422">
    <property type="pathway name" value="RHOBTB1 GTPase cycle"/>
</dbReference>
<dbReference type="UniPathway" id="UPA00763">
    <property type="reaction ID" value="UER00748"/>
</dbReference>
<dbReference type="Proteomes" id="UP000002254">
    <property type="component" value="Chromosome 32"/>
</dbReference>
<dbReference type="Proteomes" id="UP000694429">
    <property type="component" value="Unplaced"/>
</dbReference>
<dbReference type="Proteomes" id="UP000694542">
    <property type="component" value="Chromosome 32"/>
</dbReference>
<dbReference type="Proteomes" id="UP000805418">
    <property type="component" value="Unplaced"/>
</dbReference>
<dbReference type="Bgee" id="ENSCAFG00000012472">
    <property type="expression patterns" value="Expressed in jejunum and 45 other cell types or tissues"/>
</dbReference>
<dbReference type="GO" id="GO:0005829">
    <property type="term" value="C:cytosol"/>
    <property type="evidence" value="ECO:0007669"/>
    <property type="project" value="UniProtKB-SubCell"/>
</dbReference>
<dbReference type="GO" id="GO:0004115">
    <property type="term" value="F:3',5'-cyclic-AMP phosphodiesterase activity"/>
    <property type="evidence" value="ECO:0000318"/>
    <property type="project" value="GO_Central"/>
</dbReference>
<dbReference type="GO" id="GO:0047555">
    <property type="term" value="F:3',5'-cyclic-GMP phosphodiesterase activity"/>
    <property type="evidence" value="ECO:0000318"/>
    <property type="project" value="GO_Central"/>
</dbReference>
<dbReference type="GO" id="GO:0030553">
    <property type="term" value="F:cGMP binding"/>
    <property type="evidence" value="ECO:0007669"/>
    <property type="project" value="UniProtKB-KW"/>
</dbReference>
<dbReference type="GO" id="GO:0046872">
    <property type="term" value="F:metal ion binding"/>
    <property type="evidence" value="ECO:0007669"/>
    <property type="project" value="UniProtKB-KW"/>
</dbReference>
<dbReference type="GO" id="GO:0019933">
    <property type="term" value="P:cAMP-mediated signaling"/>
    <property type="evidence" value="ECO:0000318"/>
    <property type="project" value="GO_Central"/>
</dbReference>
<dbReference type="GO" id="GO:0046069">
    <property type="term" value="P:cGMP catabolic process"/>
    <property type="evidence" value="ECO:0007669"/>
    <property type="project" value="UniProtKB-UniPathway"/>
</dbReference>
<dbReference type="CDD" id="cd00077">
    <property type="entry name" value="HDc"/>
    <property type="match status" value="1"/>
</dbReference>
<dbReference type="FunFam" id="1.10.1300.10:FF:000003">
    <property type="entry name" value="Phosphodiesterase"/>
    <property type="match status" value="1"/>
</dbReference>
<dbReference type="FunFam" id="3.30.450.40:FF:000004">
    <property type="entry name" value="Phosphodiesterase"/>
    <property type="match status" value="1"/>
</dbReference>
<dbReference type="FunFam" id="3.30.450.40:FF:000015">
    <property type="entry name" value="Phosphodiesterase"/>
    <property type="match status" value="1"/>
</dbReference>
<dbReference type="Gene3D" id="3.30.450.40">
    <property type="match status" value="2"/>
</dbReference>
<dbReference type="Gene3D" id="1.10.1300.10">
    <property type="entry name" value="3'5'-cyclic nucleotide phosphodiesterase, catalytic domain"/>
    <property type="match status" value="1"/>
</dbReference>
<dbReference type="InterPro" id="IPR003018">
    <property type="entry name" value="GAF"/>
</dbReference>
<dbReference type="InterPro" id="IPR029016">
    <property type="entry name" value="GAF-like_dom_sf"/>
</dbReference>
<dbReference type="InterPro" id="IPR003607">
    <property type="entry name" value="HD/PDEase_dom"/>
</dbReference>
<dbReference type="InterPro" id="IPR023088">
    <property type="entry name" value="PDEase"/>
</dbReference>
<dbReference type="InterPro" id="IPR002073">
    <property type="entry name" value="PDEase_catalytic_dom"/>
</dbReference>
<dbReference type="InterPro" id="IPR036971">
    <property type="entry name" value="PDEase_catalytic_dom_sf"/>
</dbReference>
<dbReference type="InterPro" id="IPR023174">
    <property type="entry name" value="PDEase_CS"/>
</dbReference>
<dbReference type="PANTHER" id="PTHR11347">
    <property type="entry name" value="CYCLIC NUCLEOTIDE PHOSPHODIESTERASE"/>
    <property type="match status" value="1"/>
</dbReference>
<dbReference type="Pfam" id="PF01590">
    <property type="entry name" value="GAF"/>
    <property type="match status" value="2"/>
</dbReference>
<dbReference type="Pfam" id="PF00233">
    <property type="entry name" value="PDEase_I"/>
    <property type="match status" value="1"/>
</dbReference>
<dbReference type="PRINTS" id="PR00387">
    <property type="entry name" value="PDIESTERASE1"/>
</dbReference>
<dbReference type="SMART" id="SM00065">
    <property type="entry name" value="GAF"/>
    <property type="match status" value="2"/>
</dbReference>
<dbReference type="SMART" id="SM00471">
    <property type="entry name" value="HDc"/>
    <property type="match status" value="1"/>
</dbReference>
<dbReference type="SUPFAM" id="SSF55781">
    <property type="entry name" value="GAF domain-like"/>
    <property type="match status" value="2"/>
</dbReference>
<dbReference type="SUPFAM" id="SSF109604">
    <property type="entry name" value="HD-domain/PDEase-like"/>
    <property type="match status" value="1"/>
</dbReference>
<dbReference type="PROSITE" id="PS00126">
    <property type="entry name" value="PDEASE_I_1"/>
    <property type="match status" value="1"/>
</dbReference>
<dbReference type="PROSITE" id="PS51845">
    <property type="entry name" value="PDEASE_I_2"/>
    <property type="match status" value="1"/>
</dbReference>
<protein>
    <recommendedName>
        <fullName>cGMP-specific 3',5'-cyclic phosphodiesterase</fullName>
        <ecNumber evidence="2">3.1.4.35</ecNumber>
    </recommendedName>
    <alternativeName>
        <fullName>cGMP-binding cGMP-specific phosphodiesterase</fullName>
        <shortName>CGB-PDE</shortName>
    </alternativeName>
</protein>
<sequence>MERGSPGAGAARLPRDQDSVEAWLDDHRDFTFSYFVKKATREMVNAWFAERVHTIPVCKEGIRGHAESCSCSSQQSSRADSSAPGTPTRKISASEFDRPLRPIVVKDSEGTVSFLADSEKKEQMPLTPPRFDNDEGDQCSRLLELVKDISSHLDVTALCHKIFLHIHGLISADRYSLFLVCEDSSNDKFLISRLFDVAEGSTLEEASNNCIRLEWNKGIVGHVAALGEPLNIKDAYEDPRFNAEVDQITGYKTQSILCMPIKNHREEVVGVAQAINKKSGNGGTFTEKDEKDFAAYLAFCGIVLHNAQLYETSLLENKRNQVLLDLASLIFEEQQSLEVILKKIAATIISFMQVQKCTIFIVDEDCSDSFSSVFHMECEELEKLPDTLTRERDANRINYMYAQYVKNTMEPLNIPDVSKDKRFPWTNENTGNVNQQCIRSLLCTPIKNGKKNKVIGVCQLVNKMEENTGKVKPFNRNDEQFLEAFVIFCGLGIQNTQMYEAVERAMAKQMVTLEVLSYHASAAEEETKELQSLAAAVVPSAQTLKITDFSFSDFELSDLETALCTIRMFTDLNLVQNFQMKHEVLCRWILSVKKNYRKNVAYHNWRHAFNTAQCMFAALKAGKIQNKLTDLEILALLIAALSHDLDHRGVNNSYIQRSEHPLAQLYCHSIMEHHHFDQCLMILNSPGNQILSGLSIEEYKTTLKIIKQAILATDLALYIKRRGEFFELIRKNQFNLEDPHQKELFLAMLMTACDLSAITKPWPIQQRIAELVATEFFDQGDRERKELNIEPADLMNREKKNKIPSMQVGFIDAICLQLYEALTHVSEDCFPLLDGCRKNRQKWQALAEQQEKTLINGESSQAKRN</sequence>
<proteinExistence type="evidence at transcript level"/>
<feature type="chain" id="PRO_0000198822" description="cGMP-specific 3',5'-cyclic phosphodiesterase">
    <location>
        <begin position="1"/>
        <end position="865"/>
    </location>
</feature>
<feature type="domain" description="GAF 1">
    <location>
        <begin position="154"/>
        <end position="304"/>
    </location>
</feature>
<feature type="domain" description="GAF 2">
    <location>
        <begin position="336"/>
        <end position="493"/>
    </location>
</feature>
<feature type="domain" description="PDEase" evidence="5">
    <location>
        <begin position="526"/>
        <end position="850"/>
    </location>
</feature>
<feature type="region of interest" description="Disordered" evidence="6">
    <location>
        <begin position="69"/>
        <end position="92"/>
    </location>
</feature>
<feature type="compositionally biased region" description="Low complexity" evidence="6">
    <location>
        <begin position="69"/>
        <end position="83"/>
    </location>
</feature>
<feature type="active site" description="Proton donor" evidence="3">
    <location>
        <position position="603"/>
    </location>
</feature>
<feature type="binding site" evidence="2">
    <location>
        <position position="607"/>
    </location>
    <ligand>
        <name>Zn(2+)</name>
        <dbReference type="ChEBI" id="CHEBI:29105"/>
    </ligand>
</feature>
<feature type="binding site" evidence="2">
    <location>
        <position position="643"/>
    </location>
    <ligand>
        <name>Zn(2+)</name>
        <dbReference type="ChEBI" id="CHEBI:29105"/>
    </ligand>
</feature>
<feature type="binding site" evidence="2">
    <location>
        <position position="644"/>
    </location>
    <ligand>
        <name>Mg(2+)</name>
        <dbReference type="ChEBI" id="CHEBI:18420"/>
    </ligand>
</feature>
<feature type="binding site" evidence="2">
    <location>
        <position position="644"/>
    </location>
    <ligand>
        <name>Zn(2+)</name>
        <dbReference type="ChEBI" id="CHEBI:29105"/>
    </ligand>
</feature>
<feature type="binding site" evidence="2">
    <location>
        <position position="754"/>
    </location>
    <ligand>
        <name>Zn(2+)</name>
        <dbReference type="ChEBI" id="CHEBI:29105"/>
    </ligand>
</feature>
<feature type="binding site" evidence="2">
    <location>
        <position position="807"/>
    </location>
    <ligand>
        <name>3',5'-cyclic GMP</name>
        <dbReference type="ChEBI" id="CHEBI:57746"/>
    </ligand>
</feature>
<feature type="modified residue" description="Phosphoserine" evidence="4">
    <location>
        <position position="92"/>
    </location>
</feature>
<feature type="splice variant" id="VSP_004590" description="In isoform PDE5A2." evidence="7">
    <original>MERGSPGAGAARLPRDQDSVEAWLDDHRDFTFSYFVKKAT</original>
    <variation>MLPFGHQR</variation>
    <location>
        <begin position="1"/>
        <end position="40"/>
    </location>
</feature>